<keyword id="KW-0963">Cytoplasm</keyword>
<keyword id="KW-0251">Elongation factor</keyword>
<keyword id="KW-0342">GTP-binding</keyword>
<keyword id="KW-0378">Hydrolase</keyword>
<keyword id="KW-0460">Magnesium</keyword>
<keyword id="KW-0479">Metal-binding</keyword>
<keyword id="KW-0547">Nucleotide-binding</keyword>
<keyword id="KW-0648">Protein biosynthesis</keyword>
<keyword id="KW-1185">Reference proteome</keyword>
<sequence length="396" mass="43139">MSKEKFERKKPHINVGTIGHVDHGKTTLTAALTKVLAEAHGGDARAFDQIDNAPEERARGITIATAHVEYESESRHYAHVDCPGHADYVKNMITGAAQMDGSILVVSAADGPMPQTREHILLARQVGVPAIVVFLNKADMVDDAELLELVEMEVRELLSDYDFDGDNIPVVTGSALKALEGDDSEMGRPAIIKLVEAMDAHIPQPERPVDGDFLMPIEDVFSISGRGTVVTGRVERGVIKVGEEVEIVGITDTRKTTCTGVEMFRKLLDQGEAGDNIGALLRGIKRDDVERGQVLCKPKSITPHTHFEAEVYVLSKDEGGRHTPFFNGYRPQFYFRTTDVTGTVTLPEGTEMVMPGDNVKMTVQLIAPIAMEDGLRFAIREGGRTVGAGVVSKIIE</sequence>
<evidence type="ECO:0000250" key="1"/>
<evidence type="ECO:0000255" key="2">
    <source>
        <dbReference type="HAMAP-Rule" id="MF_00118"/>
    </source>
</evidence>
<accession>A1WVC4</accession>
<feature type="chain" id="PRO_0000337403" description="Elongation factor Tu 1">
    <location>
        <begin position="1"/>
        <end position="396"/>
    </location>
</feature>
<feature type="domain" description="tr-type G">
    <location>
        <begin position="10"/>
        <end position="206"/>
    </location>
</feature>
<feature type="region of interest" description="G1" evidence="1">
    <location>
        <begin position="19"/>
        <end position="26"/>
    </location>
</feature>
<feature type="region of interest" description="G2" evidence="1">
    <location>
        <begin position="60"/>
        <end position="64"/>
    </location>
</feature>
<feature type="region of interest" description="G3" evidence="1">
    <location>
        <begin position="81"/>
        <end position="84"/>
    </location>
</feature>
<feature type="region of interest" description="G4" evidence="1">
    <location>
        <begin position="136"/>
        <end position="139"/>
    </location>
</feature>
<feature type="region of interest" description="G5" evidence="1">
    <location>
        <begin position="174"/>
        <end position="176"/>
    </location>
</feature>
<feature type="binding site" evidence="2">
    <location>
        <begin position="19"/>
        <end position="26"/>
    </location>
    <ligand>
        <name>GTP</name>
        <dbReference type="ChEBI" id="CHEBI:37565"/>
    </ligand>
</feature>
<feature type="binding site" evidence="2">
    <location>
        <position position="26"/>
    </location>
    <ligand>
        <name>Mg(2+)</name>
        <dbReference type="ChEBI" id="CHEBI:18420"/>
    </ligand>
</feature>
<feature type="binding site" evidence="2">
    <location>
        <begin position="81"/>
        <end position="85"/>
    </location>
    <ligand>
        <name>GTP</name>
        <dbReference type="ChEBI" id="CHEBI:37565"/>
    </ligand>
</feature>
<feature type="binding site" evidence="2">
    <location>
        <begin position="136"/>
        <end position="139"/>
    </location>
    <ligand>
        <name>GTP</name>
        <dbReference type="ChEBI" id="CHEBI:37565"/>
    </ligand>
</feature>
<name>EFTU1_HALHL</name>
<protein>
    <recommendedName>
        <fullName evidence="2">Elongation factor Tu 1</fullName>
        <shortName evidence="2">EF-Tu 1</shortName>
        <ecNumber evidence="2">3.6.5.3</ecNumber>
    </recommendedName>
</protein>
<comment type="function">
    <text evidence="2">GTP hydrolase that promotes the GTP-dependent binding of aminoacyl-tRNA to the A-site of ribosomes during protein biosynthesis.</text>
</comment>
<comment type="catalytic activity">
    <reaction evidence="2">
        <text>GTP + H2O = GDP + phosphate + H(+)</text>
        <dbReference type="Rhea" id="RHEA:19669"/>
        <dbReference type="ChEBI" id="CHEBI:15377"/>
        <dbReference type="ChEBI" id="CHEBI:15378"/>
        <dbReference type="ChEBI" id="CHEBI:37565"/>
        <dbReference type="ChEBI" id="CHEBI:43474"/>
        <dbReference type="ChEBI" id="CHEBI:58189"/>
        <dbReference type="EC" id="3.6.5.3"/>
    </reaction>
    <physiologicalReaction direction="left-to-right" evidence="2">
        <dbReference type="Rhea" id="RHEA:19670"/>
    </physiologicalReaction>
</comment>
<comment type="subunit">
    <text evidence="2">Monomer.</text>
</comment>
<comment type="subcellular location">
    <subcellularLocation>
        <location evidence="2">Cytoplasm</location>
    </subcellularLocation>
</comment>
<comment type="similarity">
    <text evidence="2">Belongs to the TRAFAC class translation factor GTPase superfamily. Classic translation factor GTPase family. EF-Tu/EF-1A subfamily.</text>
</comment>
<dbReference type="EC" id="3.6.5.3" evidence="2"/>
<dbReference type="EMBL" id="CP000544">
    <property type="protein sequence ID" value="ABM61636.1"/>
    <property type="molecule type" value="Genomic_DNA"/>
</dbReference>
<dbReference type="RefSeq" id="WP_011813659.1">
    <property type="nucleotide sequence ID" value="NC_008789.1"/>
</dbReference>
<dbReference type="SMR" id="A1WVC4"/>
<dbReference type="STRING" id="349124.Hhal_0860"/>
<dbReference type="KEGG" id="hha:Hhal_0860"/>
<dbReference type="eggNOG" id="COG0050">
    <property type="taxonomic scope" value="Bacteria"/>
</dbReference>
<dbReference type="HOGENOM" id="CLU_007265_0_0_6"/>
<dbReference type="OrthoDB" id="9803139at2"/>
<dbReference type="Proteomes" id="UP000000647">
    <property type="component" value="Chromosome"/>
</dbReference>
<dbReference type="GO" id="GO:0005829">
    <property type="term" value="C:cytosol"/>
    <property type="evidence" value="ECO:0007669"/>
    <property type="project" value="TreeGrafter"/>
</dbReference>
<dbReference type="GO" id="GO:0005525">
    <property type="term" value="F:GTP binding"/>
    <property type="evidence" value="ECO:0007669"/>
    <property type="project" value="UniProtKB-UniRule"/>
</dbReference>
<dbReference type="GO" id="GO:0003924">
    <property type="term" value="F:GTPase activity"/>
    <property type="evidence" value="ECO:0007669"/>
    <property type="project" value="InterPro"/>
</dbReference>
<dbReference type="GO" id="GO:0097216">
    <property type="term" value="F:guanosine tetraphosphate binding"/>
    <property type="evidence" value="ECO:0007669"/>
    <property type="project" value="UniProtKB-ARBA"/>
</dbReference>
<dbReference type="GO" id="GO:0003746">
    <property type="term" value="F:translation elongation factor activity"/>
    <property type="evidence" value="ECO:0007669"/>
    <property type="project" value="UniProtKB-UniRule"/>
</dbReference>
<dbReference type="CDD" id="cd01884">
    <property type="entry name" value="EF_Tu"/>
    <property type="match status" value="1"/>
</dbReference>
<dbReference type="CDD" id="cd03697">
    <property type="entry name" value="EFTU_II"/>
    <property type="match status" value="1"/>
</dbReference>
<dbReference type="CDD" id="cd03707">
    <property type="entry name" value="EFTU_III"/>
    <property type="match status" value="1"/>
</dbReference>
<dbReference type="FunFam" id="2.40.30.10:FF:000001">
    <property type="entry name" value="Elongation factor Tu"/>
    <property type="match status" value="1"/>
</dbReference>
<dbReference type="FunFam" id="3.40.50.300:FF:000003">
    <property type="entry name" value="Elongation factor Tu"/>
    <property type="match status" value="1"/>
</dbReference>
<dbReference type="Gene3D" id="3.40.50.300">
    <property type="entry name" value="P-loop containing nucleotide triphosphate hydrolases"/>
    <property type="match status" value="1"/>
</dbReference>
<dbReference type="Gene3D" id="2.40.30.10">
    <property type="entry name" value="Translation factors"/>
    <property type="match status" value="2"/>
</dbReference>
<dbReference type="HAMAP" id="MF_00118_B">
    <property type="entry name" value="EF_Tu_B"/>
    <property type="match status" value="1"/>
</dbReference>
<dbReference type="InterPro" id="IPR041709">
    <property type="entry name" value="EF-Tu_GTP-bd"/>
</dbReference>
<dbReference type="InterPro" id="IPR050055">
    <property type="entry name" value="EF-Tu_GTPase"/>
</dbReference>
<dbReference type="InterPro" id="IPR004161">
    <property type="entry name" value="EFTu-like_2"/>
</dbReference>
<dbReference type="InterPro" id="IPR033720">
    <property type="entry name" value="EFTU_2"/>
</dbReference>
<dbReference type="InterPro" id="IPR031157">
    <property type="entry name" value="G_TR_CS"/>
</dbReference>
<dbReference type="InterPro" id="IPR027417">
    <property type="entry name" value="P-loop_NTPase"/>
</dbReference>
<dbReference type="InterPro" id="IPR005225">
    <property type="entry name" value="Small_GTP-bd"/>
</dbReference>
<dbReference type="InterPro" id="IPR000795">
    <property type="entry name" value="T_Tr_GTP-bd_dom"/>
</dbReference>
<dbReference type="InterPro" id="IPR009000">
    <property type="entry name" value="Transl_B-barrel_sf"/>
</dbReference>
<dbReference type="InterPro" id="IPR009001">
    <property type="entry name" value="Transl_elong_EF1A/Init_IF2_C"/>
</dbReference>
<dbReference type="InterPro" id="IPR004541">
    <property type="entry name" value="Transl_elong_EFTu/EF1A_bac/org"/>
</dbReference>
<dbReference type="InterPro" id="IPR004160">
    <property type="entry name" value="Transl_elong_EFTu/EF1A_C"/>
</dbReference>
<dbReference type="NCBIfam" id="TIGR00485">
    <property type="entry name" value="EF-Tu"/>
    <property type="match status" value="1"/>
</dbReference>
<dbReference type="NCBIfam" id="NF000766">
    <property type="entry name" value="PRK00049.1"/>
    <property type="match status" value="1"/>
</dbReference>
<dbReference type="NCBIfam" id="NF009372">
    <property type="entry name" value="PRK12735.1"/>
    <property type="match status" value="1"/>
</dbReference>
<dbReference type="NCBIfam" id="NF009373">
    <property type="entry name" value="PRK12736.1"/>
    <property type="match status" value="1"/>
</dbReference>
<dbReference type="NCBIfam" id="TIGR00231">
    <property type="entry name" value="small_GTP"/>
    <property type="match status" value="1"/>
</dbReference>
<dbReference type="PANTHER" id="PTHR43721:SF22">
    <property type="entry name" value="ELONGATION FACTOR TU, MITOCHONDRIAL"/>
    <property type="match status" value="1"/>
</dbReference>
<dbReference type="PANTHER" id="PTHR43721">
    <property type="entry name" value="ELONGATION FACTOR TU-RELATED"/>
    <property type="match status" value="1"/>
</dbReference>
<dbReference type="Pfam" id="PF00009">
    <property type="entry name" value="GTP_EFTU"/>
    <property type="match status" value="1"/>
</dbReference>
<dbReference type="Pfam" id="PF03144">
    <property type="entry name" value="GTP_EFTU_D2"/>
    <property type="match status" value="1"/>
</dbReference>
<dbReference type="Pfam" id="PF03143">
    <property type="entry name" value="GTP_EFTU_D3"/>
    <property type="match status" value="1"/>
</dbReference>
<dbReference type="PRINTS" id="PR00315">
    <property type="entry name" value="ELONGATNFCT"/>
</dbReference>
<dbReference type="SUPFAM" id="SSF50465">
    <property type="entry name" value="EF-Tu/eEF-1alpha/eIF2-gamma C-terminal domain"/>
    <property type="match status" value="1"/>
</dbReference>
<dbReference type="SUPFAM" id="SSF52540">
    <property type="entry name" value="P-loop containing nucleoside triphosphate hydrolases"/>
    <property type="match status" value="1"/>
</dbReference>
<dbReference type="SUPFAM" id="SSF50447">
    <property type="entry name" value="Translation proteins"/>
    <property type="match status" value="1"/>
</dbReference>
<dbReference type="PROSITE" id="PS00301">
    <property type="entry name" value="G_TR_1"/>
    <property type="match status" value="1"/>
</dbReference>
<dbReference type="PROSITE" id="PS51722">
    <property type="entry name" value="G_TR_2"/>
    <property type="match status" value="1"/>
</dbReference>
<gene>
    <name evidence="2" type="primary">tuf1</name>
    <name type="ordered locus">Hhal_0860</name>
</gene>
<reference key="1">
    <citation type="submission" date="2006-12" db="EMBL/GenBank/DDBJ databases">
        <title>Complete sequence of Halorhodospira halophila SL1.</title>
        <authorList>
            <consortium name="US DOE Joint Genome Institute"/>
            <person name="Copeland A."/>
            <person name="Lucas S."/>
            <person name="Lapidus A."/>
            <person name="Barry K."/>
            <person name="Detter J.C."/>
            <person name="Glavina del Rio T."/>
            <person name="Hammon N."/>
            <person name="Israni S."/>
            <person name="Dalin E."/>
            <person name="Tice H."/>
            <person name="Pitluck S."/>
            <person name="Saunders E."/>
            <person name="Brettin T."/>
            <person name="Bruce D."/>
            <person name="Han C."/>
            <person name="Tapia R."/>
            <person name="Schmutz J."/>
            <person name="Larimer F."/>
            <person name="Land M."/>
            <person name="Hauser L."/>
            <person name="Kyrpides N."/>
            <person name="Mikhailova N."/>
            <person name="Hoff W."/>
            <person name="Richardson P."/>
        </authorList>
    </citation>
    <scope>NUCLEOTIDE SEQUENCE [LARGE SCALE GENOMIC DNA]</scope>
    <source>
        <strain>DSM 244 / SL1</strain>
    </source>
</reference>
<organism>
    <name type="scientific">Halorhodospira halophila (strain DSM 244 / SL1)</name>
    <name type="common">Ectothiorhodospira halophila (strain DSM 244 / SL1)</name>
    <dbReference type="NCBI Taxonomy" id="349124"/>
    <lineage>
        <taxon>Bacteria</taxon>
        <taxon>Pseudomonadati</taxon>
        <taxon>Pseudomonadota</taxon>
        <taxon>Gammaproteobacteria</taxon>
        <taxon>Chromatiales</taxon>
        <taxon>Ectothiorhodospiraceae</taxon>
        <taxon>Halorhodospira</taxon>
    </lineage>
</organism>
<proteinExistence type="inferred from homology"/>